<gene>
    <name evidence="1" type="primary">rlmH</name>
    <name type="ordered locus">HP_0949</name>
</gene>
<name>RLMH_HELPY</name>
<comment type="function">
    <text evidence="1">Specifically methylates the pseudouridine at position 1915 (m3Psi1915) in 23S rRNA.</text>
</comment>
<comment type="catalytic activity">
    <reaction evidence="1">
        <text>pseudouridine(1915) in 23S rRNA + S-adenosyl-L-methionine = N(3)-methylpseudouridine(1915) in 23S rRNA + S-adenosyl-L-homocysteine + H(+)</text>
        <dbReference type="Rhea" id="RHEA:42752"/>
        <dbReference type="Rhea" id="RHEA-COMP:10221"/>
        <dbReference type="Rhea" id="RHEA-COMP:10222"/>
        <dbReference type="ChEBI" id="CHEBI:15378"/>
        <dbReference type="ChEBI" id="CHEBI:57856"/>
        <dbReference type="ChEBI" id="CHEBI:59789"/>
        <dbReference type="ChEBI" id="CHEBI:65314"/>
        <dbReference type="ChEBI" id="CHEBI:74486"/>
        <dbReference type="EC" id="2.1.1.177"/>
    </reaction>
</comment>
<comment type="subunit">
    <text evidence="1">Homodimer.</text>
</comment>
<comment type="subcellular location">
    <subcellularLocation>
        <location evidence="1">Cytoplasm</location>
    </subcellularLocation>
</comment>
<comment type="similarity">
    <text evidence="1">Belongs to the RNA methyltransferase RlmH family.</text>
</comment>
<proteinExistence type="inferred from homology"/>
<keyword id="KW-0963">Cytoplasm</keyword>
<keyword id="KW-0489">Methyltransferase</keyword>
<keyword id="KW-1185">Reference proteome</keyword>
<keyword id="KW-0698">rRNA processing</keyword>
<keyword id="KW-0949">S-adenosyl-L-methionine</keyword>
<keyword id="KW-0808">Transferase</keyword>
<evidence type="ECO:0000255" key="1">
    <source>
        <dbReference type="HAMAP-Rule" id="MF_00658"/>
    </source>
</evidence>
<feature type="chain" id="PRO_0000198128" description="Ribosomal RNA large subunit methyltransferase H">
    <location>
        <begin position="1"/>
        <end position="150"/>
    </location>
</feature>
<feature type="binding site" evidence="1">
    <location>
        <position position="100"/>
    </location>
    <ligand>
        <name>S-adenosyl-L-methionine</name>
        <dbReference type="ChEBI" id="CHEBI:59789"/>
    </ligand>
</feature>
<feature type="binding site" evidence="1">
    <location>
        <begin position="118"/>
        <end position="123"/>
    </location>
    <ligand>
        <name>S-adenosyl-L-methionine</name>
        <dbReference type="ChEBI" id="CHEBI:59789"/>
    </ligand>
</feature>
<reference key="1">
    <citation type="journal article" date="1997" name="Nature">
        <title>The complete genome sequence of the gastric pathogen Helicobacter pylori.</title>
        <authorList>
            <person name="Tomb J.-F."/>
            <person name="White O."/>
            <person name="Kerlavage A.R."/>
            <person name="Clayton R.A."/>
            <person name="Sutton G.G."/>
            <person name="Fleischmann R.D."/>
            <person name="Ketchum K.A."/>
            <person name="Klenk H.-P."/>
            <person name="Gill S.R."/>
            <person name="Dougherty B.A."/>
            <person name="Nelson K.E."/>
            <person name="Quackenbush J."/>
            <person name="Zhou L."/>
            <person name="Kirkness E.F."/>
            <person name="Peterson S.N."/>
            <person name="Loftus B.J."/>
            <person name="Richardson D.L."/>
            <person name="Dodson R.J."/>
            <person name="Khalak H.G."/>
            <person name="Glodek A."/>
            <person name="McKenney K."/>
            <person name="FitzGerald L.M."/>
            <person name="Lee N."/>
            <person name="Adams M.D."/>
            <person name="Hickey E.K."/>
            <person name="Berg D.E."/>
            <person name="Gocayne J.D."/>
            <person name="Utterback T.R."/>
            <person name="Peterson J.D."/>
            <person name="Kelley J.M."/>
            <person name="Cotton M.D."/>
            <person name="Weidman J.F."/>
            <person name="Fujii C."/>
            <person name="Bowman C."/>
            <person name="Watthey L."/>
            <person name="Wallin E."/>
            <person name="Hayes W.S."/>
            <person name="Borodovsky M."/>
            <person name="Karp P.D."/>
            <person name="Smith H.O."/>
            <person name="Fraser C.M."/>
            <person name="Venter J.C."/>
        </authorList>
    </citation>
    <scope>NUCLEOTIDE SEQUENCE [LARGE SCALE GENOMIC DNA]</scope>
    <source>
        <strain>ATCC 700392 / 26695</strain>
    </source>
</reference>
<dbReference type="EC" id="2.1.1.177" evidence="1"/>
<dbReference type="EMBL" id="AE000511">
    <property type="protein sequence ID" value="AAD07994.1"/>
    <property type="molecule type" value="Genomic_DNA"/>
</dbReference>
<dbReference type="PIR" id="E64638">
    <property type="entry name" value="E64638"/>
</dbReference>
<dbReference type="RefSeq" id="NP_207741.1">
    <property type="nucleotide sequence ID" value="NC_000915.1"/>
</dbReference>
<dbReference type="RefSeq" id="WP_001203892.1">
    <property type="nucleotide sequence ID" value="NC_018939.1"/>
</dbReference>
<dbReference type="SMR" id="O25603"/>
<dbReference type="STRING" id="85962.HP_0949"/>
<dbReference type="PaxDb" id="85962-C694_04890"/>
<dbReference type="EnsemblBacteria" id="AAD07994">
    <property type="protein sequence ID" value="AAD07994"/>
    <property type="gene ID" value="HP_0949"/>
</dbReference>
<dbReference type="KEGG" id="heo:C694_04890"/>
<dbReference type="KEGG" id="hpy:HP_0949"/>
<dbReference type="PATRIC" id="fig|85962.47.peg.1017"/>
<dbReference type="eggNOG" id="COG1576">
    <property type="taxonomic scope" value="Bacteria"/>
</dbReference>
<dbReference type="InParanoid" id="O25603"/>
<dbReference type="OrthoDB" id="9806643at2"/>
<dbReference type="PhylomeDB" id="O25603"/>
<dbReference type="Proteomes" id="UP000000429">
    <property type="component" value="Chromosome"/>
</dbReference>
<dbReference type="GO" id="GO:0005737">
    <property type="term" value="C:cytoplasm"/>
    <property type="evidence" value="ECO:0007669"/>
    <property type="project" value="UniProtKB-SubCell"/>
</dbReference>
<dbReference type="GO" id="GO:0070038">
    <property type="term" value="F:rRNA (pseudouridine-N3-)-methyltransferase activity"/>
    <property type="evidence" value="ECO:0007669"/>
    <property type="project" value="UniProtKB-UniRule"/>
</dbReference>
<dbReference type="CDD" id="cd18081">
    <property type="entry name" value="RlmH-like"/>
    <property type="match status" value="1"/>
</dbReference>
<dbReference type="Gene3D" id="3.40.1280.10">
    <property type="match status" value="1"/>
</dbReference>
<dbReference type="HAMAP" id="MF_00658">
    <property type="entry name" value="23SrRNA_methyltr_H"/>
    <property type="match status" value="1"/>
</dbReference>
<dbReference type="InterPro" id="IPR029028">
    <property type="entry name" value="Alpha/beta_knot_MTases"/>
</dbReference>
<dbReference type="InterPro" id="IPR003742">
    <property type="entry name" value="RlmH-like"/>
</dbReference>
<dbReference type="InterPro" id="IPR029026">
    <property type="entry name" value="tRNA_m1G_MTases_N"/>
</dbReference>
<dbReference type="NCBIfam" id="NF000987">
    <property type="entry name" value="PRK00103.2-1"/>
    <property type="match status" value="1"/>
</dbReference>
<dbReference type="PANTHER" id="PTHR33603">
    <property type="entry name" value="METHYLTRANSFERASE"/>
    <property type="match status" value="1"/>
</dbReference>
<dbReference type="PANTHER" id="PTHR33603:SF1">
    <property type="entry name" value="RIBOSOMAL RNA LARGE SUBUNIT METHYLTRANSFERASE H"/>
    <property type="match status" value="1"/>
</dbReference>
<dbReference type="Pfam" id="PF02590">
    <property type="entry name" value="SPOUT_MTase"/>
    <property type="match status" value="1"/>
</dbReference>
<dbReference type="PIRSF" id="PIRSF004505">
    <property type="entry name" value="MT_bac"/>
    <property type="match status" value="1"/>
</dbReference>
<dbReference type="SUPFAM" id="SSF75217">
    <property type="entry name" value="alpha/beta knot"/>
    <property type="match status" value="1"/>
</dbReference>
<organism>
    <name type="scientific">Helicobacter pylori (strain ATCC 700392 / 26695)</name>
    <name type="common">Campylobacter pylori</name>
    <dbReference type="NCBI Taxonomy" id="85962"/>
    <lineage>
        <taxon>Bacteria</taxon>
        <taxon>Pseudomonadati</taxon>
        <taxon>Campylobacterota</taxon>
        <taxon>Epsilonproteobacteria</taxon>
        <taxon>Campylobacterales</taxon>
        <taxon>Helicobacteraceae</taxon>
        <taxon>Helicobacter</taxon>
    </lineage>
</organism>
<accession>O25603</accession>
<protein>
    <recommendedName>
        <fullName evidence="1">Ribosomal RNA large subunit methyltransferase H</fullName>
        <ecNumber evidence="1">2.1.1.177</ecNumber>
    </recommendedName>
    <alternativeName>
        <fullName evidence="1">23S rRNA (pseudouridine1915-N3)-methyltransferase</fullName>
    </alternativeName>
    <alternativeName>
        <fullName evidence="1">23S rRNA m3Psi1915 methyltransferase</fullName>
    </alternativeName>
    <alternativeName>
        <fullName evidence="1">rRNA (pseudouridine-N3-)-methyltransferase RlmH</fullName>
    </alternativeName>
</protein>
<sequence length="150" mass="17331">MRCVVYSIAKSSPLELVKIYQKQCRQFDCELELVDLFPKNTANAQKVSKKLAQKSYSLAFEPYLNPKAKNIALHPKAQRGDSFAFSKMLENHLNINFFIAGAYGFEENFLKDCQAWSLSEMTFSHEVAKIVLCEQIYRALSIIFKHPYHK</sequence>